<name>RL1_ECOBW</name>
<proteinExistence type="inferred from homology"/>
<keyword id="KW-0678">Repressor</keyword>
<keyword id="KW-0687">Ribonucleoprotein</keyword>
<keyword id="KW-0689">Ribosomal protein</keyword>
<keyword id="KW-0694">RNA-binding</keyword>
<keyword id="KW-0699">rRNA-binding</keyword>
<keyword id="KW-0810">Translation regulation</keyword>
<keyword id="KW-0820">tRNA-binding</keyword>
<protein>
    <recommendedName>
        <fullName evidence="1">Large ribosomal subunit protein uL1</fullName>
    </recommendedName>
    <alternativeName>
        <fullName evidence="2">50S ribosomal protein L1</fullName>
    </alternativeName>
</protein>
<evidence type="ECO:0000255" key="1">
    <source>
        <dbReference type="HAMAP-Rule" id="MF_01318"/>
    </source>
</evidence>
<evidence type="ECO:0000305" key="2"/>
<organism>
    <name type="scientific">Escherichia coli (strain K12 / MC4100 / BW2952)</name>
    <dbReference type="NCBI Taxonomy" id="595496"/>
    <lineage>
        <taxon>Bacteria</taxon>
        <taxon>Pseudomonadati</taxon>
        <taxon>Pseudomonadota</taxon>
        <taxon>Gammaproteobacteria</taxon>
        <taxon>Enterobacterales</taxon>
        <taxon>Enterobacteriaceae</taxon>
        <taxon>Escherichia</taxon>
    </lineage>
</organism>
<dbReference type="EMBL" id="CP001396">
    <property type="protein sequence ID" value="ACR61846.1"/>
    <property type="molecule type" value="Genomic_DNA"/>
</dbReference>
<dbReference type="RefSeq" id="WP_001096684.1">
    <property type="nucleotide sequence ID" value="NC_012759.1"/>
</dbReference>
<dbReference type="SMR" id="C5A0S4"/>
<dbReference type="GeneID" id="93777910"/>
<dbReference type="KEGG" id="ebw:BWG_3643"/>
<dbReference type="HOGENOM" id="CLU_062853_0_0_6"/>
<dbReference type="GO" id="GO:0022625">
    <property type="term" value="C:cytosolic large ribosomal subunit"/>
    <property type="evidence" value="ECO:0007669"/>
    <property type="project" value="TreeGrafter"/>
</dbReference>
<dbReference type="GO" id="GO:0019843">
    <property type="term" value="F:rRNA binding"/>
    <property type="evidence" value="ECO:0007669"/>
    <property type="project" value="UniProtKB-UniRule"/>
</dbReference>
<dbReference type="GO" id="GO:0003735">
    <property type="term" value="F:structural constituent of ribosome"/>
    <property type="evidence" value="ECO:0007669"/>
    <property type="project" value="InterPro"/>
</dbReference>
<dbReference type="GO" id="GO:0000049">
    <property type="term" value="F:tRNA binding"/>
    <property type="evidence" value="ECO:0007669"/>
    <property type="project" value="UniProtKB-KW"/>
</dbReference>
<dbReference type="GO" id="GO:0006417">
    <property type="term" value="P:regulation of translation"/>
    <property type="evidence" value="ECO:0007669"/>
    <property type="project" value="UniProtKB-KW"/>
</dbReference>
<dbReference type="GO" id="GO:0006412">
    <property type="term" value="P:translation"/>
    <property type="evidence" value="ECO:0007669"/>
    <property type="project" value="UniProtKB-UniRule"/>
</dbReference>
<dbReference type="CDD" id="cd00403">
    <property type="entry name" value="Ribosomal_L1"/>
    <property type="match status" value="1"/>
</dbReference>
<dbReference type="FunFam" id="3.40.50.790:FF:000001">
    <property type="entry name" value="50S ribosomal protein L1"/>
    <property type="match status" value="1"/>
</dbReference>
<dbReference type="Gene3D" id="3.30.190.20">
    <property type="match status" value="1"/>
</dbReference>
<dbReference type="Gene3D" id="3.40.50.790">
    <property type="match status" value="1"/>
</dbReference>
<dbReference type="HAMAP" id="MF_01318_B">
    <property type="entry name" value="Ribosomal_uL1_B"/>
    <property type="match status" value="1"/>
</dbReference>
<dbReference type="InterPro" id="IPR005878">
    <property type="entry name" value="Ribosom_uL1_bac-type"/>
</dbReference>
<dbReference type="InterPro" id="IPR002143">
    <property type="entry name" value="Ribosomal_uL1"/>
</dbReference>
<dbReference type="InterPro" id="IPR023674">
    <property type="entry name" value="Ribosomal_uL1-like"/>
</dbReference>
<dbReference type="InterPro" id="IPR028364">
    <property type="entry name" value="Ribosomal_uL1/biogenesis"/>
</dbReference>
<dbReference type="InterPro" id="IPR016095">
    <property type="entry name" value="Ribosomal_uL1_3-a/b-sand"/>
</dbReference>
<dbReference type="InterPro" id="IPR023673">
    <property type="entry name" value="Ribosomal_uL1_CS"/>
</dbReference>
<dbReference type="NCBIfam" id="TIGR01169">
    <property type="entry name" value="rplA_bact"/>
    <property type="match status" value="1"/>
</dbReference>
<dbReference type="PANTHER" id="PTHR36427">
    <property type="entry name" value="54S RIBOSOMAL PROTEIN L1, MITOCHONDRIAL"/>
    <property type="match status" value="1"/>
</dbReference>
<dbReference type="PANTHER" id="PTHR36427:SF3">
    <property type="entry name" value="LARGE RIBOSOMAL SUBUNIT PROTEIN UL1M"/>
    <property type="match status" value="1"/>
</dbReference>
<dbReference type="Pfam" id="PF00687">
    <property type="entry name" value="Ribosomal_L1"/>
    <property type="match status" value="1"/>
</dbReference>
<dbReference type="PIRSF" id="PIRSF002155">
    <property type="entry name" value="Ribosomal_L1"/>
    <property type="match status" value="1"/>
</dbReference>
<dbReference type="SUPFAM" id="SSF56808">
    <property type="entry name" value="Ribosomal protein L1"/>
    <property type="match status" value="1"/>
</dbReference>
<dbReference type="PROSITE" id="PS01199">
    <property type="entry name" value="RIBOSOMAL_L1"/>
    <property type="match status" value="1"/>
</dbReference>
<accession>C5A0S4</accession>
<sequence>MAKLTKRMRVIREKVDATKQYDINEAIALLKELATAKFVESVDVAVNLGIDARKSDQNVRGATVLPHGTGRSVRVAVFTQGANAEAAKAAGAELVGMEDLADQIKKGEMNFDVVIASPDAMRVVGQLGQVLGPRGLMPNPKVGTVTPNVAEAVKNAKAGQVRYRNDKNGIIHTTIGKVDFDADKLKENLEALLVALKKAKPTQAKGVYIKKVSISTTMGAGVAVDQAGLSASVN</sequence>
<reference key="1">
    <citation type="journal article" date="2009" name="J. Bacteriol.">
        <title>Genomic sequencing reveals regulatory mutations and recombinational events in the widely used MC4100 lineage of Escherichia coli K-12.</title>
        <authorList>
            <person name="Ferenci T."/>
            <person name="Zhou Z."/>
            <person name="Betteridge T."/>
            <person name="Ren Y."/>
            <person name="Liu Y."/>
            <person name="Feng L."/>
            <person name="Reeves P.R."/>
            <person name="Wang L."/>
        </authorList>
    </citation>
    <scope>NUCLEOTIDE SEQUENCE [LARGE SCALE GENOMIC DNA]</scope>
    <source>
        <strain>K12 / MC4100 / BW2952</strain>
    </source>
</reference>
<gene>
    <name evidence="1" type="primary">rplA</name>
    <name type="ordered locus">BWG_3643</name>
</gene>
<comment type="function">
    <text evidence="1">Binds directly to 23S rRNA. The L1 stalk is quite mobile in the ribosome, and is involved in E site tRNA release.</text>
</comment>
<comment type="function">
    <text evidence="1">Protein L1 is also a translational repressor protein, it controls the translation of the L11 operon by binding to its mRNA.</text>
</comment>
<comment type="subunit">
    <text evidence="1">Part of the 50S ribosomal subunit.</text>
</comment>
<comment type="similarity">
    <text evidence="1">Belongs to the universal ribosomal protein uL1 family.</text>
</comment>
<feature type="chain" id="PRO_1000214419" description="Large ribosomal subunit protein uL1">
    <location>
        <begin position="1"/>
        <end position="234"/>
    </location>
</feature>